<accession>Q4WA21</accession>
<evidence type="ECO:0000250" key="1"/>
<evidence type="ECO:0000256" key="2">
    <source>
        <dbReference type="SAM" id="MobiDB-lite"/>
    </source>
</evidence>
<evidence type="ECO:0000305" key="3"/>
<keyword id="KW-0238">DNA-binding</keyword>
<keyword id="KW-0539">Nucleus</keyword>
<keyword id="KW-1185">Reference proteome</keyword>
<keyword id="KW-0804">Transcription</keyword>
<keyword id="KW-0805">Transcription regulation</keyword>
<reference key="1">
    <citation type="journal article" date="2005" name="Nature">
        <title>Genomic sequence of the pathogenic and allergenic filamentous fungus Aspergillus fumigatus.</title>
        <authorList>
            <person name="Nierman W.C."/>
            <person name="Pain A."/>
            <person name="Anderson M.J."/>
            <person name="Wortman J.R."/>
            <person name="Kim H.S."/>
            <person name="Arroyo J."/>
            <person name="Berriman M."/>
            <person name="Abe K."/>
            <person name="Archer D.B."/>
            <person name="Bermejo C."/>
            <person name="Bennett J.W."/>
            <person name="Bowyer P."/>
            <person name="Chen D."/>
            <person name="Collins M."/>
            <person name="Coulsen R."/>
            <person name="Davies R."/>
            <person name="Dyer P.S."/>
            <person name="Farman M.L."/>
            <person name="Fedorova N."/>
            <person name="Fedorova N.D."/>
            <person name="Feldblyum T.V."/>
            <person name="Fischer R."/>
            <person name="Fosker N."/>
            <person name="Fraser A."/>
            <person name="Garcia J.L."/>
            <person name="Garcia M.J."/>
            <person name="Goble A."/>
            <person name="Goldman G.H."/>
            <person name="Gomi K."/>
            <person name="Griffith-Jones S."/>
            <person name="Gwilliam R."/>
            <person name="Haas B.J."/>
            <person name="Haas H."/>
            <person name="Harris D.E."/>
            <person name="Horiuchi H."/>
            <person name="Huang J."/>
            <person name="Humphray S."/>
            <person name="Jimenez J."/>
            <person name="Keller N."/>
            <person name="Khouri H."/>
            <person name="Kitamoto K."/>
            <person name="Kobayashi T."/>
            <person name="Konzack S."/>
            <person name="Kulkarni R."/>
            <person name="Kumagai T."/>
            <person name="Lafton A."/>
            <person name="Latge J.-P."/>
            <person name="Li W."/>
            <person name="Lord A."/>
            <person name="Lu C."/>
            <person name="Majoros W.H."/>
            <person name="May G.S."/>
            <person name="Miller B.L."/>
            <person name="Mohamoud Y."/>
            <person name="Molina M."/>
            <person name="Monod M."/>
            <person name="Mouyna I."/>
            <person name="Mulligan S."/>
            <person name="Murphy L.D."/>
            <person name="O'Neil S."/>
            <person name="Paulsen I."/>
            <person name="Penalva M.A."/>
            <person name="Pertea M."/>
            <person name="Price C."/>
            <person name="Pritchard B.L."/>
            <person name="Quail M.A."/>
            <person name="Rabbinowitsch E."/>
            <person name="Rawlins N."/>
            <person name="Rajandream M.A."/>
            <person name="Reichard U."/>
            <person name="Renauld H."/>
            <person name="Robson G.D."/>
            <person name="Rodriguez de Cordoba S."/>
            <person name="Rodriguez-Pena J.M."/>
            <person name="Ronning C.M."/>
            <person name="Rutter S."/>
            <person name="Salzberg S.L."/>
            <person name="Sanchez M."/>
            <person name="Sanchez-Ferrero J.C."/>
            <person name="Saunders D."/>
            <person name="Seeger K."/>
            <person name="Squares R."/>
            <person name="Squares S."/>
            <person name="Takeuchi M."/>
            <person name="Tekaia F."/>
            <person name="Turner G."/>
            <person name="Vazquez de Aldana C.R."/>
            <person name="Weidman J."/>
            <person name="White O."/>
            <person name="Woodward J.R."/>
            <person name="Yu J.-H."/>
            <person name="Fraser C.M."/>
            <person name="Galagan J.E."/>
            <person name="Asai K."/>
            <person name="Machida M."/>
            <person name="Hall N."/>
            <person name="Barrell B.G."/>
            <person name="Denning D.W."/>
        </authorList>
    </citation>
    <scope>NUCLEOTIDE SEQUENCE [LARGE SCALE GENOMIC DNA]</scope>
    <source>
        <strain>ATCC MYA-4609 / CBS 101355 / FGSC A1100 / Af293</strain>
    </source>
</reference>
<feature type="chain" id="PRO_0000306815" description="Putative transcription factor kapC">
    <location>
        <begin position="1"/>
        <end position="280"/>
    </location>
</feature>
<feature type="domain" description="bZIP">
    <location>
        <begin position="96"/>
        <end position="159"/>
    </location>
</feature>
<feature type="region of interest" description="Disordered" evidence="2">
    <location>
        <begin position="1"/>
        <end position="102"/>
    </location>
</feature>
<feature type="region of interest" description="Basic motif" evidence="1">
    <location>
        <begin position="97"/>
        <end position="120"/>
    </location>
</feature>
<feature type="region of interest" description="Leucine-zipper" evidence="1">
    <location>
        <begin position="124"/>
        <end position="155"/>
    </location>
</feature>
<feature type="region of interest" description="Disordered" evidence="2">
    <location>
        <begin position="169"/>
        <end position="280"/>
    </location>
</feature>
<feature type="compositionally biased region" description="Pro residues" evidence="2">
    <location>
        <begin position="39"/>
        <end position="49"/>
    </location>
</feature>
<feature type="compositionally biased region" description="Polar residues" evidence="2">
    <location>
        <begin position="79"/>
        <end position="89"/>
    </location>
</feature>
<feature type="compositionally biased region" description="Pro residues" evidence="2">
    <location>
        <begin position="197"/>
        <end position="206"/>
    </location>
</feature>
<protein>
    <recommendedName>
        <fullName>Putative transcription factor kapC</fullName>
    </recommendedName>
</protein>
<organism>
    <name type="scientific">Aspergillus fumigatus (strain ATCC MYA-4609 / CBS 101355 / FGSC A1100 / Af293)</name>
    <name type="common">Neosartorya fumigata</name>
    <dbReference type="NCBI Taxonomy" id="330879"/>
    <lineage>
        <taxon>Eukaryota</taxon>
        <taxon>Fungi</taxon>
        <taxon>Dikarya</taxon>
        <taxon>Ascomycota</taxon>
        <taxon>Pezizomycotina</taxon>
        <taxon>Eurotiomycetes</taxon>
        <taxon>Eurotiomycetidae</taxon>
        <taxon>Eurotiales</taxon>
        <taxon>Aspergillaceae</taxon>
        <taxon>Aspergillus</taxon>
        <taxon>Aspergillus subgen. Fumigati</taxon>
    </lineage>
</organism>
<name>KAPC_ASPFU</name>
<gene>
    <name type="primary">kapC</name>
    <name type="ORF">AFUA_4G02940</name>
</gene>
<dbReference type="EMBL" id="AAHF01000016">
    <property type="protein sequence ID" value="EAL84442.1"/>
    <property type="status" value="ALT_SEQ"/>
    <property type="molecule type" value="Genomic_DNA"/>
</dbReference>
<dbReference type="RefSeq" id="XP_746480.1">
    <property type="nucleotide sequence ID" value="XM_741387.1"/>
</dbReference>
<dbReference type="SMR" id="Q4WA21"/>
<dbReference type="GeneID" id="3504030"/>
<dbReference type="KEGG" id="afm:AFUA_4G02940"/>
<dbReference type="eggNOG" id="ENOG502SC5V">
    <property type="taxonomic scope" value="Eukaryota"/>
</dbReference>
<dbReference type="InParanoid" id="Q4WA21"/>
<dbReference type="OrthoDB" id="2593073at2759"/>
<dbReference type="Proteomes" id="UP000002530">
    <property type="component" value="Chromosome 4"/>
</dbReference>
<dbReference type="GO" id="GO:0090575">
    <property type="term" value="C:RNA polymerase II transcription regulator complex"/>
    <property type="evidence" value="ECO:0000318"/>
    <property type="project" value="GO_Central"/>
</dbReference>
<dbReference type="GO" id="GO:0001228">
    <property type="term" value="F:DNA-binding transcription activator activity, RNA polymerase II-specific"/>
    <property type="evidence" value="ECO:0000318"/>
    <property type="project" value="GO_Central"/>
</dbReference>
<dbReference type="GO" id="GO:0000976">
    <property type="term" value="F:transcription cis-regulatory region binding"/>
    <property type="evidence" value="ECO:0000318"/>
    <property type="project" value="GO_Central"/>
</dbReference>
<dbReference type="Gene3D" id="1.20.5.170">
    <property type="match status" value="1"/>
</dbReference>
<dbReference type="InterPro" id="IPR050936">
    <property type="entry name" value="AP-1-like"/>
</dbReference>
<dbReference type="InterPro" id="IPR004827">
    <property type="entry name" value="bZIP"/>
</dbReference>
<dbReference type="InterPro" id="IPR046347">
    <property type="entry name" value="bZIP_sf"/>
</dbReference>
<dbReference type="PANTHER" id="PTHR40621">
    <property type="entry name" value="TRANSCRIPTION FACTOR KAPC-RELATED"/>
    <property type="match status" value="1"/>
</dbReference>
<dbReference type="PANTHER" id="PTHR40621:SF11">
    <property type="entry name" value="TRANSCRIPTION FACTOR KAPC-RELATED"/>
    <property type="match status" value="1"/>
</dbReference>
<dbReference type="Pfam" id="PF00170">
    <property type="entry name" value="bZIP_1"/>
    <property type="match status" value="1"/>
</dbReference>
<dbReference type="SMART" id="SM00338">
    <property type="entry name" value="BRLZ"/>
    <property type="match status" value="1"/>
</dbReference>
<dbReference type="SUPFAM" id="SSF57959">
    <property type="entry name" value="Leucine zipper domain"/>
    <property type="match status" value="1"/>
</dbReference>
<dbReference type="PROSITE" id="PS00036">
    <property type="entry name" value="BZIP_BASIC"/>
    <property type="match status" value="1"/>
</dbReference>
<sequence>MQPALAPHPSAQDHADQVLHDQLLAAQHQHLTHPQQARPQPPAPQPPHMQPNTPARDQNNIDPAISGATMLTGPPQTPTQPDVTGQETPKTYGKRPLSTSKRAAQNRAAQRAFRQRKEAHIRELEGKVKAYESMGEAIKALQAENYQLREYIINLQSRLLDSQGEVPELPGNIDLSQPRSEIPVPPIPNSGTATTTAPPPTAPQQPQPSHAQAPTSNDDMNSLNRIAVAGLGMRKPPTEEANYLGNNFQAQARRVRPDEGQPEASELPKQEQTHGLPLIS</sequence>
<proteinExistence type="inferred from homology"/>
<comment type="function">
    <text evidence="1">Putative transcription factor.</text>
</comment>
<comment type="subcellular location">
    <subcellularLocation>
        <location evidence="1">Nucleus</location>
    </subcellularLocation>
</comment>
<comment type="similarity">
    <text evidence="3">Belongs to the bZIP family.</text>
</comment>
<comment type="sequence caution" evidence="3">
    <conflict type="erroneous gene model prediction">
        <sequence resource="EMBL-CDS" id="EAL84442"/>
    </conflict>
</comment>